<proteinExistence type="inferred from homology"/>
<feature type="signal peptide" evidence="1">
    <location>
        <begin position="1"/>
        <end position="18"/>
    </location>
</feature>
<feature type="chain" id="PRO_0000270017" description="Chaperone SurA">
    <location>
        <begin position="19"/>
        <end position="429"/>
    </location>
</feature>
<feature type="domain" description="PpiC 1" evidence="1">
    <location>
        <begin position="170"/>
        <end position="271"/>
    </location>
</feature>
<feature type="domain" description="PpiC 2" evidence="1">
    <location>
        <begin position="281"/>
        <end position="380"/>
    </location>
</feature>
<protein>
    <recommendedName>
        <fullName evidence="1">Chaperone SurA</fullName>
    </recommendedName>
    <alternativeName>
        <fullName evidence="1">Peptidyl-prolyl cis-trans isomerase SurA</fullName>
        <shortName evidence="1">PPIase SurA</shortName>
        <ecNumber evidence="1">5.2.1.8</ecNumber>
    </alternativeName>
    <alternativeName>
        <fullName evidence="1">Rotamase SurA</fullName>
    </alternativeName>
</protein>
<gene>
    <name evidence="1" type="primary">surA</name>
    <name type="ordered locus">lpl0351</name>
</gene>
<dbReference type="EC" id="5.2.1.8" evidence="1"/>
<dbReference type="EMBL" id="CR628337">
    <property type="protein sequence ID" value="CAH14582.1"/>
    <property type="molecule type" value="Genomic_DNA"/>
</dbReference>
<dbReference type="RefSeq" id="WP_011214614.1">
    <property type="nucleotide sequence ID" value="NC_006369.1"/>
</dbReference>
<dbReference type="SMR" id="Q5WZN0"/>
<dbReference type="KEGG" id="lpf:lpl0351"/>
<dbReference type="LegioList" id="lpl0351"/>
<dbReference type="HOGENOM" id="CLU_034646_11_0_6"/>
<dbReference type="Proteomes" id="UP000002517">
    <property type="component" value="Chromosome"/>
</dbReference>
<dbReference type="GO" id="GO:0030288">
    <property type="term" value="C:outer membrane-bounded periplasmic space"/>
    <property type="evidence" value="ECO:0007669"/>
    <property type="project" value="InterPro"/>
</dbReference>
<dbReference type="GO" id="GO:0042277">
    <property type="term" value="F:peptide binding"/>
    <property type="evidence" value="ECO:0007669"/>
    <property type="project" value="InterPro"/>
</dbReference>
<dbReference type="GO" id="GO:0003755">
    <property type="term" value="F:peptidyl-prolyl cis-trans isomerase activity"/>
    <property type="evidence" value="ECO:0007669"/>
    <property type="project" value="UniProtKB-UniRule"/>
</dbReference>
<dbReference type="GO" id="GO:0051082">
    <property type="term" value="F:unfolded protein binding"/>
    <property type="evidence" value="ECO:0007669"/>
    <property type="project" value="UniProtKB-UniRule"/>
</dbReference>
<dbReference type="GO" id="GO:0043165">
    <property type="term" value="P:Gram-negative-bacterium-type cell outer membrane assembly"/>
    <property type="evidence" value="ECO:0007669"/>
    <property type="project" value="InterPro"/>
</dbReference>
<dbReference type="GO" id="GO:0006457">
    <property type="term" value="P:protein folding"/>
    <property type="evidence" value="ECO:0007669"/>
    <property type="project" value="UniProtKB-UniRule"/>
</dbReference>
<dbReference type="GO" id="GO:0050821">
    <property type="term" value="P:protein stabilization"/>
    <property type="evidence" value="ECO:0007669"/>
    <property type="project" value="InterPro"/>
</dbReference>
<dbReference type="Gene3D" id="3.10.50.40">
    <property type="match status" value="2"/>
</dbReference>
<dbReference type="Gene3D" id="1.10.4030.10">
    <property type="entry name" value="Porin chaperone SurA, peptide-binding domain"/>
    <property type="match status" value="1"/>
</dbReference>
<dbReference type="HAMAP" id="MF_01183">
    <property type="entry name" value="Chaperone_SurA"/>
    <property type="match status" value="1"/>
</dbReference>
<dbReference type="InterPro" id="IPR050280">
    <property type="entry name" value="OMP_Chaperone_SurA"/>
</dbReference>
<dbReference type="InterPro" id="IPR046357">
    <property type="entry name" value="PPIase_dom_sf"/>
</dbReference>
<dbReference type="InterPro" id="IPR000297">
    <property type="entry name" value="PPIase_PpiC"/>
</dbReference>
<dbReference type="InterPro" id="IPR023034">
    <property type="entry name" value="PPIase_SurA"/>
</dbReference>
<dbReference type="InterPro" id="IPR015391">
    <property type="entry name" value="SurA_N"/>
</dbReference>
<dbReference type="InterPro" id="IPR027304">
    <property type="entry name" value="Trigger_fact/SurA_dom_sf"/>
</dbReference>
<dbReference type="PANTHER" id="PTHR47637">
    <property type="entry name" value="CHAPERONE SURA"/>
    <property type="match status" value="1"/>
</dbReference>
<dbReference type="PANTHER" id="PTHR47637:SF1">
    <property type="entry name" value="CHAPERONE SURA"/>
    <property type="match status" value="1"/>
</dbReference>
<dbReference type="Pfam" id="PF00639">
    <property type="entry name" value="Rotamase"/>
    <property type="match status" value="1"/>
</dbReference>
<dbReference type="Pfam" id="PF13616">
    <property type="entry name" value="Rotamase_3"/>
    <property type="match status" value="1"/>
</dbReference>
<dbReference type="Pfam" id="PF09312">
    <property type="entry name" value="SurA_N"/>
    <property type="match status" value="1"/>
</dbReference>
<dbReference type="SUPFAM" id="SSF54534">
    <property type="entry name" value="FKBP-like"/>
    <property type="match status" value="2"/>
</dbReference>
<dbReference type="SUPFAM" id="SSF109998">
    <property type="entry name" value="Triger factor/SurA peptide-binding domain-like"/>
    <property type="match status" value="1"/>
</dbReference>
<dbReference type="PROSITE" id="PS50198">
    <property type="entry name" value="PPIC_PPIASE_2"/>
    <property type="match status" value="2"/>
</dbReference>
<organism>
    <name type="scientific">Legionella pneumophila (strain Lens)</name>
    <dbReference type="NCBI Taxonomy" id="297245"/>
    <lineage>
        <taxon>Bacteria</taxon>
        <taxon>Pseudomonadati</taxon>
        <taxon>Pseudomonadota</taxon>
        <taxon>Gammaproteobacteria</taxon>
        <taxon>Legionellales</taxon>
        <taxon>Legionellaceae</taxon>
        <taxon>Legionella</taxon>
    </lineage>
</organism>
<evidence type="ECO:0000255" key="1">
    <source>
        <dbReference type="HAMAP-Rule" id="MF_01183"/>
    </source>
</evidence>
<comment type="function">
    <text evidence="1">Chaperone involved in the correct folding and assembly of outer membrane proteins. Recognizes specific patterns of aromatic residues and the orientation of their side chains, which are found more frequently in integral outer membrane proteins. May act in both early periplasmic and late outer membrane-associated steps of protein maturation.</text>
</comment>
<comment type="catalytic activity">
    <reaction evidence="1">
        <text>[protein]-peptidylproline (omega=180) = [protein]-peptidylproline (omega=0)</text>
        <dbReference type="Rhea" id="RHEA:16237"/>
        <dbReference type="Rhea" id="RHEA-COMP:10747"/>
        <dbReference type="Rhea" id="RHEA-COMP:10748"/>
        <dbReference type="ChEBI" id="CHEBI:83833"/>
        <dbReference type="ChEBI" id="CHEBI:83834"/>
        <dbReference type="EC" id="5.2.1.8"/>
    </reaction>
</comment>
<comment type="subcellular location">
    <subcellularLocation>
        <location evidence="1">Periplasm</location>
    </subcellularLocation>
    <text evidence="1">Is capable of associating with the outer membrane.</text>
</comment>
<comment type="domain">
    <text evidence="1">The PPIase activity resides only in the second parvulin domain. The N-terminal region and the C-terminal tail are necessary and sufficient for the chaperone activity of SurA. The PPIase activity is dispensable for SurA to function as a chaperone. The N-terminal region and the C-terminal tail are also required for porin recognition.</text>
</comment>
<keyword id="KW-0143">Chaperone</keyword>
<keyword id="KW-0413">Isomerase</keyword>
<keyword id="KW-0574">Periplasm</keyword>
<keyword id="KW-0677">Repeat</keyword>
<keyword id="KW-0697">Rotamase</keyword>
<keyword id="KW-0732">Signal</keyword>
<reference key="1">
    <citation type="journal article" date="2004" name="Nat. Genet.">
        <title>Evidence in the Legionella pneumophila genome for exploitation of host cell functions and high genome plasticity.</title>
        <authorList>
            <person name="Cazalet C."/>
            <person name="Rusniok C."/>
            <person name="Brueggemann H."/>
            <person name="Zidane N."/>
            <person name="Magnier A."/>
            <person name="Ma L."/>
            <person name="Tichit M."/>
            <person name="Jarraud S."/>
            <person name="Bouchier C."/>
            <person name="Vandenesch F."/>
            <person name="Kunst F."/>
            <person name="Etienne J."/>
            <person name="Glaser P."/>
            <person name="Buchrieser C."/>
        </authorList>
    </citation>
    <scope>NUCLEOTIDE SEQUENCE [LARGE SCALE GENOMIC DNA]</scope>
    <source>
        <strain>Lens</strain>
    </source>
</reference>
<sequence>MFKRIALVCALFSGVCFAEGKQLLDKVVAIVNDNVITSSELNAQVELSKKQIIAQNMQMPDESVLRKQVLQHLIDVDLEMQMAKQNGITIENAEIDEAIEKIAASNHLNLSQMRDEITKQGISWQEYRQNIRKEMLISRVQQKAVGKDIIVTNEQVDQYLKTAGRIENSNLTYHLKNIVIPLSEEPTTRQLQRAKIEAENLLNKIKKGEDFSRLAIEESSGEFALEGGDLGERHLAELPEVFAKEVVHMKVGQVAGPIRAGNGFHLIKLVAVGGENQRHVITQTHVRHILLKPDASMVPSEAIKQVNNIYRQIQSGKDFALMAKQYSLDAASAVKGGDLGWVNPGELVPEFEKTMNSLPLHKVSKPVKTQYGWHLIEVIARRQKDDSEAFKKQQVRQFLQQRKFVEAVQNWQQHLRSQAYINIVDKDLA</sequence>
<accession>Q5WZN0</accession>
<name>SURA_LEGPL</name>